<name>1108L_ASFWA</name>
<accession>P0C9I5</accession>
<feature type="signal peptide" evidence="2">
    <location>
        <begin position="1"/>
        <end position="16"/>
    </location>
</feature>
<feature type="chain" id="PRO_0000373207" description="Protein MGF 110-8L">
    <location>
        <begin position="17"/>
        <end position="124"/>
    </location>
</feature>
<feature type="glycosylation site" description="N-linked (GlcNAc...) asparagine; by host" evidence="2">
    <location>
        <position position="76"/>
    </location>
</feature>
<dbReference type="EMBL" id="AY261366">
    <property type="status" value="NOT_ANNOTATED_CDS"/>
    <property type="molecule type" value="Genomic_DNA"/>
</dbReference>
<dbReference type="Proteomes" id="UP000000858">
    <property type="component" value="Segment"/>
</dbReference>
<dbReference type="InterPro" id="IPR004848">
    <property type="entry name" value="ASFV_fam_110"/>
</dbReference>
<dbReference type="Pfam" id="PF01639">
    <property type="entry name" value="v110"/>
    <property type="match status" value="1"/>
</dbReference>
<gene>
    <name type="ordered locus">War-017</name>
</gene>
<sequence length="124" mass="14778">MKVLILVLLGVVILQAAPIRKVENLLPTRNPPQNELVYWCTYANQCDFCWECIHGICRNRIQADWPVIHQNDWIINCTVSRWNGQCHYYEGSQQYLHHEMDCINPTSHTYPHTEYMKIYERDDL</sequence>
<comment type="function">
    <text evidence="1">Plays a role in virus cell tropism, and may be required for efficient virus replication in macrophages.</text>
</comment>
<comment type="similarity">
    <text evidence="3">Belongs to the asfivirus MGF 110 family.</text>
</comment>
<organism>
    <name type="scientific">African swine fever virus (isolate Warthog/Namibia/Wart80/1980)</name>
    <name type="common">ASFV</name>
    <dbReference type="NCBI Taxonomy" id="561444"/>
    <lineage>
        <taxon>Viruses</taxon>
        <taxon>Varidnaviria</taxon>
        <taxon>Bamfordvirae</taxon>
        <taxon>Nucleocytoviricota</taxon>
        <taxon>Pokkesviricetes</taxon>
        <taxon>Asfuvirales</taxon>
        <taxon>Asfarviridae</taxon>
        <taxon>Asfivirus</taxon>
        <taxon>African swine fever virus</taxon>
    </lineage>
</organism>
<evidence type="ECO:0000250" key="1"/>
<evidence type="ECO:0000255" key="2"/>
<evidence type="ECO:0000305" key="3"/>
<keyword id="KW-0325">Glycoprotein</keyword>
<keyword id="KW-0732">Signal</keyword>
<proteinExistence type="inferred from homology"/>
<organismHost>
    <name type="scientific">Ornithodoros</name>
    <name type="common">relapsing fever ticks</name>
    <dbReference type="NCBI Taxonomy" id="6937"/>
</organismHost>
<organismHost>
    <name type="scientific">Phacochoerus aethiopicus</name>
    <name type="common">Warthog</name>
    <dbReference type="NCBI Taxonomy" id="85517"/>
</organismHost>
<organismHost>
    <name type="scientific">Phacochoerus africanus</name>
    <name type="common">Warthog</name>
    <dbReference type="NCBI Taxonomy" id="41426"/>
</organismHost>
<organismHost>
    <name type="scientific">Potamochoerus larvatus</name>
    <name type="common">Bushpig</name>
    <dbReference type="NCBI Taxonomy" id="273792"/>
</organismHost>
<organismHost>
    <name type="scientific">Sus scrofa</name>
    <name type="common">Pig</name>
    <dbReference type="NCBI Taxonomy" id="9823"/>
</organismHost>
<protein>
    <recommendedName>
        <fullName>Protein MGF 110-8L</fullName>
    </recommendedName>
</protein>
<reference key="1">
    <citation type="submission" date="2003-03" db="EMBL/GenBank/DDBJ databases">
        <title>African swine fever virus genomes.</title>
        <authorList>
            <person name="Kutish G.F."/>
            <person name="Rock D.L."/>
        </authorList>
    </citation>
    <scope>NUCLEOTIDE SEQUENCE [LARGE SCALE GENOMIC DNA]</scope>
</reference>